<protein>
    <recommendedName>
        <fullName evidence="3">Serine/threonine-protein phosphatase 3</fullName>
        <ecNumber evidence="1">3.1.3.16</ecNumber>
    </recommendedName>
    <alternativeName>
        <fullName evidence="2">PP2C-like Ser/Thr phosphatase</fullName>
    </alternativeName>
    <alternativeName>
        <fullName evidence="2">Protein phosphatase C</fullName>
    </alternativeName>
</protein>
<accession>P76395</accession>
<accession>Q2MAX7</accession>
<sequence>MSWRLVYASTVGTSHISADLPCQDACQMQIAWLNDQQPLLSVFVADGAGSVSQGGEGAMLAVNEAMAYMSQKVQGGELGLNDVLATNMVLTIRQRLFAEAEAKELAVRDFACTFLGLISSPDGTLIMQIGDGGVVVDLGHGLQLPLTPMAGEYANMTHFITDEDAVSRLETFTSTGRAHKVAAFTDGIQRLALNMLDNSPHVPFFTPFFNGLAAATQEQLDLLPELLKQFLSSPAVNERTDDDKTLALALWAE</sequence>
<comment type="function">
    <text evidence="1">PP2C-like phosphatase that can dephosphorylate YegI. In vitro, can hydrolyze p-nitrophenyl phosphate (pNPP) to p-nitrophenol.</text>
</comment>
<comment type="catalytic activity">
    <reaction evidence="1">
        <text>O-phospho-L-seryl-[protein] + H2O = L-seryl-[protein] + phosphate</text>
        <dbReference type="Rhea" id="RHEA:20629"/>
        <dbReference type="Rhea" id="RHEA-COMP:9863"/>
        <dbReference type="Rhea" id="RHEA-COMP:11604"/>
        <dbReference type="ChEBI" id="CHEBI:15377"/>
        <dbReference type="ChEBI" id="CHEBI:29999"/>
        <dbReference type="ChEBI" id="CHEBI:43474"/>
        <dbReference type="ChEBI" id="CHEBI:83421"/>
        <dbReference type="EC" id="3.1.3.16"/>
    </reaction>
</comment>
<comment type="catalytic activity">
    <reaction evidence="1">
        <text>O-phospho-L-threonyl-[protein] + H2O = L-threonyl-[protein] + phosphate</text>
        <dbReference type="Rhea" id="RHEA:47004"/>
        <dbReference type="Rhea" id="RHEA-COMP:11060"/>
        <dbReference type="Rhea" id="RHEA-COMP:11605"/>
        <dbReference type="ChEBI" id="CHEBI:15377"/>
        <dbReference type="ChEBI" id="CHEBI:30013"/>
        <dbReference type="ChEBI" id="CHEBI:43474"/>
        <dbReference type="ChEBI" id="CHEBI:61977"/>
        <dbReference type="EC" id="3.1.3.16"/>
    </reaction>
</comment>
<comment type="cofactor">
    <cofactor evidence="1">
        <name>Mn(2+)</name>
        <dbReference type="ChEBI" id="CHEBI:29035"/>
    </cofactor>
</comment>
<comment type="activity regulation">
    <text evidence="1">Activity dramatically decreases in the presence of the general protein phosphatase inhibitor sodium phosphate. Slightly inhibited by sodium fluoride. Activity decreases in the presence of the metal chelator EDTA.</text>
</comment>
<comment type="biophysicochemical properties">
    <kinetics>
        <KM evidence="1">0.21 mM for pNPP</KM>
        <Vmax evidence="1">99.85 pmol/min/mg enzyme with pNPP as substrate</Vmax>
        <text evidence="1">kcat is 0.093 sec(-1) with pNPP as substrate.</text>
    </kinetics>
</comment>
<comment type="PTM">
    <text evidence="1">Phosphorylated by YegI.</text>
</comment>
<proteinExistence type="evidence at protein level"/>
<feature type="chain" id="PRO_0000169126" description="Serine/threonine-protein phosphatase 3">
    <location>
        <begin position="1"/>
        <end position="253"/>
    </location>
</feature>
<feature type="mutagenesis site" description="Loss of phosphatase activity." evidence="1">
    <original>D</original>
    <variation>N</variation>
    <location>
        <position position="46"/>
    </location>
</feature>
<reference key="1">
    <citation type="journal article" date="1997" name="Science">
        <title>The complete genome sequence of Escherichia coli K-12.</title>
        <authorList>
            <person name="Blattner F.R."/>
            <person name="Plunkett G. III"/>
            <person name="Bloch C.A."/>
            <person name="Perna N.T."/>
            <person name="Burland V."/>
            <person name="Riley M."/>
            <person name="Collado-Vides J."/>
            <person name="Glasner J.D."/>
            <person name="Rode C.K."/>
            <person name="Mayhew G.F."/>
            <person name="Gregor J."/>
            <person name="Davis N.W."/>
            <person name="Kirkpatrick H.A."/>
            <person name="Goeden M.A."/>
            <person name="Rose D.J."/>
            <person name="Mau B."/>
            <person name="Shao Y."/>
        </authorList>
    </citation>
    <scope>NUCLEOTIDE SEQUENCE [LARGE SCALE GENOMIC DNA]</scope>
    <source>
        <strain>K12 / MG1655 / ATCC 47076</strain>
    </source>
</reference>
<reference key="2">
    <citation type="journal article" date="2006" name="Mol. Syst. Biol.">
        <title>Highly accurate genome sequences of Escherichia coli K-12 strains MG1655 and W3110.</title>
        <authorList>
            <person name="Hayashi K."/>
            <person name="Morooka N."/>
            <person name="Yamamoto Y."/>
            <person name="Fujita K."/>
            <person name="Isono K."/>
            <person name="Choi S."/>
            <person name="Ohtsubo E."/>
            <person name="Baba T."/>
            <person name="Wanner B.L."/>
            <person name="Mori H."/>
            <person name="Horiuchi T."/>
        </authorList>
    </citation>
    <scope>NUCLEOTIDE SEQUENCE [LARGE SCALE GENOMIC DNA]</scope>
    <source>
        <strain>K12 / W3110 / ATCC 27325 / DSM 5911</strain>
    </source>
</reference>
<reference key="3">
    <citation type="journal article" date="2018" name="J. Bacteriol.">
        <title>Identification and biochemical characterization of a novel PP2C-like Ser/Thr phosphatase in E. coli.</title>
        <authorList>
            <person name="Rajagopalan K."/>
            <person name="Dworkin J."/>
        </authorList>
    </citation>
    <scope>FUNCTION</scope>
    <scope>CATALYTIC ACTIVITY</scope>
    <scope>COFACTOR</scope>
    <scope>ACTIVITY REGULATION</scope>
    <scope>BIOPHYSICOCHEMICAL PROPERTIES</scope>
    <scope>PHOSPHORYLATION</scope>
    <scope>MUTAGENESIS OF ASP-46</scope>
</reference>
<organism>
    <name type="scientific">Escherichia coli (strain K12)</name>
    <dbReference type="NCBI Taxonomy" id="83333"/>
    <lineage>
        <taxon>Bacteria</taxon>
        <taxon>Pseudomonadati</taxon>
        <taxon>Pseudomonadota</taxon>
        <taxon>Gammaproteobacteria</taxon>
        <taxon>Enterobacterales</taxon>
        <taxon>Enterobacteriaceae</taxon>
        <taxon>Escherichia</taxon>
    </lineage>
</organism>
<keyword id="KW-0378">Hydrolase</keyword>
<keyword id="KW-0464">Manganese</keyword>
<keyword id="KW-0597">Phosphoprotein</keyword>
<keyword id="KW-0904">Protein phosphatase</keyword>
<keyword id="KW-1185">Reference proteome</keyword>
<gene>
    <name evidence="2" type="primary">pphC</name>
    <name type="synonym">yegK</name>
    <name type="ordered locus">b2072</name>
    <name type="ordered locus">JW2057</name>
</gene>
<name>PRP3_ECOLI</name>
<evidence type="ECO:0000269" key="1">
    <source>
    </source>
</evidence>
<evidence type="ECO:0000303" key="2">
    <source>
    </source>
</evidence>
<evidence type="ECO:0000305" key="3"/>
<dbReference type="EC" id="3.1.3.16" evidence="1"/>
<dbReference type="EMBL" id="U00096">
    <property type="protein sequence ID" value="AAC75133.1"/>
    <property type="molecule type" value="Genomic_DNA"/>
</dbReference>
<dbReference type="EMBL" id="AP009048">
    <property type="protein sequence ID" value="BAE76579.1"/>
    <property type="molecule type" value="Genomic_DNA"/>
</dbReference>
<dbReference type="PIR" id="G64973">
    <property type="entry name" value="G64973"/>
</dbReference>
<dbReference type="RefSeq" id="NP_416576.1">
    <property type="nucleotide sequence ID" value="NC_000913.3"/>
</dbReference>
<dbReference type="RefSeq" id="WP_000119090.1">
    <property type="nucleotide sequence ID" value="NZ_LN832404.1"/>
</dbReference>
<dbReference type="SMR" id="P76395"/>
<dbReference type="BioGRID" id="4260424">
    <property type="interactions" value="9"/>
</dbReference>
<dbReference type="FunCoup" id="P76395">
    <property type="interactions" value="92"/>
</dbReference>
<dbReference type="STRING" id="511145.b2072"/>
<dbReference type="PaxDb" id="511145-b2072"/>
<dbReference type="EnsemblBacteria" id="AAC75133">
    <property type="protein sequence ID" value="AAC75133"/>
    <property type="gene ID" value="b2072"/>
</dbReference>
<dbReference type="GeneID" id="75205989"/>
<dbReference type="GeneID" id="947269"/>
<dbReference type="KEGG" id="ecj:JW2057"/>
<dbReference type="KEGG" id="eco:b2072"/>
<dbReference type="PATRIC" id="fig|511145.12.peg.2149"/>
<dbReference type="EchoBASE" id="EB3807"/>
<dbReference type="eggNOG" id="COG0631">
    <property type="taxonomic scope" value="Bacteria"/>
</dbReference>
<dbReference type="HOGENOM" id="CLU_066842_1_1_6"/>
<dbReference type="InParanoid" id="P76395"/>
<dbReference type="OMA" id="CQDAHHW"/>
<dbReference type="OrthoDB" id="9805674at2"/>
<dbReference type="BioCyc" id="EcoCyc:G7111-MONOMER"/>
<dbReference type="BioCyc" id="MetaCyc:G7111-MONOMER"/>
<dbReference type="BRENDA" id="3.1.3.16">
    <property type="organism ID" value="2026"/>
</dbReference>
<dbReference type="SABIO-RK" id="P76395"/>
<dbReference type="PRO" id="PR:P76395"/>
<dbReference type="Proteomes" id="UP000000625">
    <property type="component" value="Chromosome"/>
</dbReference>
<dbReference type="GO" id="GO:0016791">
    <property type="term" value="F:phosphatase activity"/>
    <property type="evidence" value="ECO:0000314"/>
    <property type="project" value="EcoCyc"/>
</dbReference>
<dbReference type="GO" id="GO:0004722">
    <property type="term" value="F:protein serine/threonine phosphatase activity"/>
    <property type="evidence" value="ECO:0007669"/>
    <property type="project" value="UniProtKB-EC"/>
</dbReference>
<dbReference type="Gene3D" id="3.60.40.10">
    <property type="entry name" value="PPM-type phosphatase domain"/>
    <property type="match status" value="1"/>
</dbReference>
<dbReference type="InterPro" id="IPR036457">
    <property type="entry name" value="PPM-type-like_dom_sf"/>
</dbReference>
<dbReference type="Pfam" id="PF13672">
    <property type="entry name" value="PP2C_2"/>
    <property type="match status" value="1"/>
</dbReference>
<dbReference type="SUPFAM" id="SSF81606">
    <property type="entry name" value="PP2C-like"/>
    <property type="match status" value="1"/>
</dbReference>